<comment type="function">
    <text evidence="1">Involved in cell division and chromosome segregation.</text>
</comment>
<comment type="similarity">
    <text evidence="1">Belongs to the WhiA family.</text>
</comment>
<evidence type="ECO:0000255" key="1">
    <source>
        <dbReference type="HAMAP-Rule" id="MF_01420"/>
    </source>
</evidence>
<gene>
    <name evidence="1" type="primary">whiA</name>
    <name type="ordered locus">MT1466</name>
</gene>
<sequence length="327" mass="35135">MAMTTDVKDELSRLVVKSVSARRAEVTSLLRFAGGLHIVGGRVVVEAELDLGSIARRLRKEIFELYGYTAVVHVLSASGIRKSTRYVLRVANDGEALARQTGLLDMRGRPVRGLPAQVVGGSIDDAEAAWRGAFLAHGSLTEPGRSSALEVSCPGPEAALALVGAARRLGVGAKAREVRGADRVVVRDGEAIGALLTRMGAQDTRLVWEERRLRREVRATANRLANFDDANLRRSARAAVAAAARVERALEILGDTVPEHLASAGKLRVEHRQASLEELGRLADPPMTKDAVAGRIRRLLSMADRKAKVDGIPDTESVVTPDLLEDA</sequence>
<dbReference type="EMBL" id="AE000516">
    <property type="protein sequence ID" value="AAK45731.1"/>
    <property type="molecule type" value="Genomic_DNA"/>
</dbReference>
<dbReference type="PIR" id="D70903">
    <property type="entry name" value="D70903"/>
</dbReference>
<dbReference type="SMR" id="P9WF44"/>
<dbReference type="KEGG" id="mtc:MT1466"/>
<dbReference type="HOGENOM" id="CLU_053282_0_0_11"/>
<dbReference type="Proteomes" id="UP000001020">
    <property type="component" value="Chromosome"/>
</dbReference>
<dbReference type="GO" id="GO:0003677">
    <property type="term" value="F:DNA binding"/>
    <property type="evidence" value="ECO:0007669"/>
    <property type="project" value="UniProtKB-UniRule"/>
</dbReference>
<dbReference type="GO" id="GO:0051301">
    <property type="term" value="P:cell division"/>
    <property type="evidence" value="ECO:0007669"/>
    <property type="project" value="UniProtKB-UniRule"/>
</dbReference>
<dbReference type="GO" id="GO:0043937">
    <property type="term" value="P:regulation of sporulation"/>
    <property type="evidence" value="ECO:0007669"/>
    <property type="project" value="InterPro"/>
</dbReference>
<dbReference type="FunFam" id="3.10.28.10:FF:000001">
    <property type="entry name" value="Probable cell division protein WhiA"/>
    <property type="match status" value="1"/>
</dbReference>
<dbReference type="Gene3D" id="3.10.28.10">
    <property type="entry name" value="Homing endonucleases"/>
    <property type="match status" value="1"/>
</dbReference>
<dbReference type="HAMAP" id="MF_01420">
    <property type="entry name" value="HTH_type_WhiA"/>
    <property type="match status" value="1"/>
</dbReference>
<dbReference type="InterPro" id="IPR027434">
    <property type="entry name" value="Homing_endonucl"/>
</dbReference>
<dbReference type="InterPro" id="IPR018478">
    <property type="entry name" value="Sporu_reg_WhiA_N_dom"/>
</dbReference>
<dbReference type="InterPro" id="IPR003802">
    <property type="entry name" value="Sporulation_regulator_WhiA"/>
</dbReference>
<dbReference type="InterPro" id="IPR023054">
    <property type="entry name" value="Sporulation_regulator_WhiA_C"/>
</dbReference>
<dbReference type="InterPro" id="IPR039518">
    <property type="entry name" value="WhiA_LAGLIDADG_dom"/>
</dbReference>
<dbReference type="NCBIfam" id="TIGR00647">
    <property type="entry name" value="DNA_bind_WhiA"/>
    <property type="match status" value="1"/>
</dbReference>
<dbReference type="PANTHER" id="PTHR37307">
    <property type="entry name" value="CELL DIVISION PROTEIN WHIA-RELATED"/>
    <property type="match status" value="1"/>
</dbReference>
<dbReference type="PANTHER" id="PTHR37307:SF1">
    <property type="entry name" value="CELL DIVISION PROTEIN WHIA-RELATED"/>
    <property type="match status" value="1"/>
</dbReference>
<dbReference type="Pfam" id="PF02650">
    <property type="entry name" value="HTH_WhiA"/>
    <property type="match status" value="1"/>
</dbReference>
<dbReference type="Pfam" id="PF14527">
    <property type="entry name" value="LAGLIDADG_WhiA"/>
    <property type="match status" value="1"/>
</dbReference>
<dbReference type="Pfam" id="PF10298">
    <property type="entry name" value="WhiA_N"/>
    <property type="match status" value="1"/>
</dbReference>
<accession>P9WF44</accession>
<accession>L0T6T7</accession>
<accession>P71692</accession>
<accession>Q7D8G9</accession>
<proteinExistence type="inferred from homology"/>
<reference key="1">
    <citation type="journal article" date="2002" name="J. Bacteriol.">
        <title>Whole-genome comparison of Mycobacterium tuberculosis clinical and laboratory strains.</title>
        <authorList>
            <person name="Fleischmann R.D."/>
            <person name="Alland D."/>
            <person name="Eisen J.A."/>
            <person name="Carpenter L."/>
            <person name="White O."/>
            <person name="Peterson J.D."/>
            <person name="DeBoy R.T."/>
            <person name="Dodson R.J."/>
            <person name="Gwinn M.L."/>
            <person name="Haft D.H."/>
            <person name="Hickey E.K."/>
            <person name="Kolonay J.F."/>
            <person name="Nelson W.C."/>
            <person name="Umayam L.A."/>
            <person name="Ermolaeva M.D."/>
            <person name="Salzberg S.L."/>
            <person name="Delcher A."/>
            <person name="Utterback T.R."/>
            <person name="Weidman J.F."/>
            <person name="Khouri H.M."/>
            <person name="Gill J."/>
            <person name="Mikula A."/>
            <person name="Bishai W."/>
            <person name="Jacobs W.R. Jr."/>
            <person name="Venter J.C."/>
            <person name="Fraser C.M."/>
        </authorList>
    </citation>
    <scope>NUCLEOTIDE SEQUENCE [LARGE SCALE GENOMIC DNA]</scope>
    <source>
        <strain>CDC 1551 / Oshkosh</strain>
    </source>
</reference>
<keyword id="KW-0131">Cell cycle</keyword>
<keyword id="KW-0132">Cell division</keyword>
<keyword id="KW-0238">DNA-binding</keyword>
<keyword id="KW-1185">Reference proteome</keyword>
<feature type="chain" id="PRO_0000428603" description="Probable cell division protein WhiA">
    <location>
        <begin position="1"/>
        <end position="327"/>
    </location>
</feature>
<feature type="DNA-binding region" description="H-T-H motif" evidence="1">
    <location>
        <begin position="275"/>
        <end position="308"/>
    </location>
</feature>
<name>WHIA_MYCTO</name>
<organism>
    <name type="scientific">Mycobacterium tuberculosis (strain CDC 1551 / Oshkosh)</name>
    <dbReference type="NCBI Taxonomy" id="83331"/>
    <lineage>
        <taxon>Bacteria</taxon>
        <taxon>Bacillati</taxon>
        <taxon>Actinomycetota</taxon>
        <taxon>Actinomycetes</taxon>
        <taxon>Mycobacteriales</taxon>
        <taxon>Mycobacteriaceae</taxon>
        <taxon>Mycobacterium</taxon>
        <taxon>Mycobacterium tuberculosis complex</taxon>
    </lineage>
</organism>
<protein>
    <recommendedName>
        <fullName evidence="1">Probable cell division protein WhiA</fullName>
    </recommendedName>
</protein>